<reference key="1">
    <citation type="journal article" date="2005" name="Nature">
        <title>The genome of the social amoeba Dictyostelium discoideum.</title>
        <authorList>
            <person name="Eichinger L."/>
            <person name="Pachebat J.A."/>
            <person name="Gloeckner G."/>
            <person name="Rajandream M.A."/>
            <person name="Sucgang R."/>
            <person name="Berriman M."/>
            <person name="Song J."/>
            <person name="Olsen R."/>
            <person name="Szafranski K."/>
            <person name="Xu Q."/>
            <person name="Tunggal B."/>
            <person name="Kummerfeld S."/>
            <person name="Madera M."/>
            <person name="Konfortov B.A."/>
            <person name="Rivero F."/>
            <person name="Bankier A.T."/>
            <person name="Lehmann R."/>
            <person name="Hamlin N."/>
            <person name="Davies R."/>
            <person name="Gaudet P."/>
            <person name="Fey P."/>
            <person name="Pilcher K."/>
            <person name="Chen G."/>
            <person name="Saunders D."/>
            <person name="Sodergren E.J."/>
            <person name="Davis P."/>
            <person name="Kerhornou A."/>
            <person name="Nie X."/>
            <person name="Hall N."/>
            <person name="Anjard C."/>
            <person name="Hemphill L."/>
            <person name="Bason N."/>
            <person name="Farbrother P."/>
            <person name="Desany B."/>
            <person name="Just E."/>
            <person name="Morio T."/>
            <person name="Rost R."/>
            <person name="Churcher C.M."/>
            <person name="Cooper J."/>
            <person name="Haydock S."/>
            <person name="van Driessche N."/>
            <person name="Cronin A."/>
            <person name="Goodhead I."/>
            <person name="Muzny D.M."/>
            <person name="Mourier T."/>
            <person name="Pain A."/>
            <person name="Lu M."/>
            <person name="Harper D."/>
            <person name="Lindsay R."/>
            <person name="Hauser H."/>
            <person name="James K.D."/>
            <person name="Quiles M."/>
            <person name="Madan Babu M."/>
            <person name="Saito T."/>
            <person name="Buchrieser C."/>
            <person name="Wardroper A."/>
            <person name="Felder M."/>
            <person name="Thangavelu M."/>
            <person name="Johnson D."/>
            <person name="Knights A."/>
            <person name="Loulseged H."/>
            <person name="Mungall K.L."/>
            <person name="Oliver K."/>
            <person name="Price C."/>
            <person name="Quail M.A."/>
            <person name="Urushihara H."/>
            <person name="Hernandez J."/>
            <person name="Rabbinowitsch E."/>
            <person name="Steffen D."/>
            <person name="Sanders M."/>
            <person name="Ma J."/>
            <person name="Kohara Y."/>
            <person name="Sharp S."/>
            <person name="Simmonds M.N."/>
            <person name="Spiegler S."/>
            <person name="Tivey A."/>
            <person name="Sugano S."/>
            <person name="White B."/>
            <person name="Walker D."/>
            <person name="Woodward J.R."/>
            <person name="Winckler T."/>
            <person name="Tanaka Y."/>
            <person name="Shaulsky G."/>
            <person name="Schleicher M."/>
            <person name="Weinstock G.M."/>
            <person name="Rosenthal A."/>
            <person name="Cox E.C."/>
            <person name="Chisholm R.L."/>
            <person name="Gibbs R.A."/>
            <person name="Loomis W.F."/>
            <person name="Platzer M."/>
            <person name="Kay R.R."/>
            <person name="Williams J.G."/>
            <person name="Dear P.H."/>
            <person name="Noegel A.A."/>
            <person name="Barrell B.G."/>
            <person name="Kuspa A."/>
        </authorList>
    </citation>
    <scope>NUCLEOTIDE SEQUENCE [LARGE SCALE GENOMIC DNA]</scope>
    <source>
        <strain>AX4</strain>
    </source>
</reference>
<dbReference type="EC" id="1.-.-.-"/>
<dbReference type="EMBL" id="AAFI02000073">
    <property type="protein sequence ID" value="EAL64965.1"/>
    <property type="molecule type" value="Genomic_DNA"/>
</dbReference>
<dbReference type="SMR" id="Q54NS9"/>
<dbReference type="FunCoup" id="Q54NS9">
    <property type="interactions" value="27"/>
</dbReference>
<dbReference type="STRING" id="44689.Q54NS9"/>
<dbReference type="PaxDb" id="44689-DDB0266658"/>
<dbReference type="EnsemblProtists" id="EAL64965">
    <property type="protein sequence ID" value="EAL64965"/>
    <property type="gene ID" value="DDB_G0285003"/>
</dbReference>
<dbReference type="KEGG" id="ddi:DDB_G0285003"/>
<dbReference type="dictyBase" id="DDB_G0285003">
    <property type="gene designation" value="aifC"/>
</dbReference>
<dbReference type="VEuPathDB" id="AmoebaDB:DDB_G0285003"/>
<dbReference type="eggNOG" id="KOG2495">
    <property type="taxonomic scope" value="Eukaryota"/>
</dbReference>
<dbReference type="HOGENOM" id="CLU_019845_2_0_1"/>
<dbReference type="InParanoid" id="Q54NS9"/>
<dbReference type="OMA" id="PIPFKQS"/>
<dbReference type="PhylomeDB" id="Q54NS9"/>
<dbReference type="PRO" id="PR:Q54NS9"/>
<dbReference type="Proteomes" id="UP000002195">
    <property type="component" value="Chromosome 4"/>
</dbReference>
<dbReference type="GO" id="GO:0005737">
    <property type="term" value="C:cytoplasm"/>
    <property type="evidence" value="ECO:0000318"/>
    <property type="project" value="GO_Central"/>
</dbReference>
<dbReference type="GO" id="GO:0005811">
    <property type="term" value="C:lipid droplet"/>
    <property type="evidence" value="ECO:0007005"/>
    <property type="project" value="dictyBase"/>
</dbReference>
<dbReference type="GO" id="GO:0004174">
    <property type="term" value="F:electron-transferring-flavoprotein dehydrogenase activity"/>
    <property type="evidence" value="ECO:0000318"/>
    <property type="project" value="GO_Central"/>
</dbReference>
<dbReference type="GO" id="GO:0050660">
    <property type="term" value="F:flavin adenine dinucleotide binding"/>
    <property type="evidence" value="ECO:0000318"/>
    <property type="project" value="GO_Central"/>
</dbReference>
<dbReference type="FunFam" id="3.50.50.100:FF:000006">
    <property type="entry name" value="apoptosis-inducing factor 2"/>
    <property type="match status" value="1"/>
</dbReference>
<dbReference type="Gene3D" id="3.50.50.100">
    <property type="match status" value="1"/>
</dbReference>
<dbReference type="InterPro" id="IPR036188">
    <property type="entry name" value="FAD/NAD-bd_sf"/>
</dbReference>
<dbReference type="InterPro" id="IPR023753">
    <property type="entry name" value="FAD/NAD-binding_dom"/>
</dbReference>
<dbReference type="PANTHER" id="PTHR43735">
    <property type="entry name" value="APOPTOSIS-INDUCING FACTOR 1"/>
    <property type="match status" value="1"/>
</dbReference>
<dbReference type="PANTHER" id="PTHR43735:SF3">
    <property type="entry name" value="FERROPTOSIS SUPPRESSOR PROTEIN 1"/>
    <property type="match status" value="1"/>
</dbReference>
<dbReference type="Pfam" id="PF07992">
    <property type="entry name" value="Pyr_redox_2"/>
    <property type="match status" value="1"/>
</dbReference>
<dbReference type="PRINTS" id="PR00368">
    <property type="entry name" value="FADPNR"/>
</dbReference>
<dbReference type="SUPFAM" id="SSF51905">
    <property type="entry name" value="FAD/NAD(P)-binding domain"/>
    <property type="match status" value="2"/>
</dbReference>
<comment type="function">
    <text evidence="1">Putative FAD-dependent oxidoreductase.</text>
</comment>
<comment type="cofactor">
    <cofactor evidence="1">
        <name>FAD</name>
        <dbReference type="ChEBI" id="CHEBI:57692"/>
    </cofactor>
</comment>
<comment type="similarity">
    <text evidence="3">Belongs to the FAD-dependent oxidoreductase family.</text>
</comment>
<keyword id="KW-0274">FAD</keyword>
<keyword id="KW-0285">Flavoprotein</keyword>
<keyword id="KW-0560">Oxidoreductase</keyword>
<keyword id="KW-1185">Reference proteome</keyword>
<evidence type="ECO:0000250" key="1"/>
<evidence type="ECO:0000255" key="2"/>
<evidence type="ECO:0000305" key="3"/>
<sequence>MNYLYNISESLKKIFNYFSSITRDCEKKRVLIIGCGFGGSQVAKLLDSNFEVTVVERKQTFFNSIASIRAIVEPELAKKIYIPYDKLLKNGKFIYGTVIEISPTLVKLEDGKELTFDYLVIATGSNSLAPFKAPLEKISGTEIFNYYKDISEQIKQAKSILIVGGGSVGCEVVGEIINKYPIKNKELAKKITIVHSGNKLVSSKTNNKFNNLINESMKKRNVSVILNDRIEIPDDIKQCFINQTSPNFQVSLKTYKTKNGLSIESDFVIWTIGIKLNSESYKTNFSNEINEIGQIKVNQSCQVQGYDNIFAIGDITDFDELKTTYNALSHGNIVAKVIKDLSNGKNKNQLAKHKLLPPIISLSLGPKDGLTQINSNLNFGSFISRILKSNNLLINRFQTHFNNPEPLK</sequence>
<proteinExistence type="inferred from homology"/>
<gene>
    <name type="primary">aifA</name>
    <name type="ORF">DDB_G0285003</name>
</gene>
<name>AIFA_DICDI</name>
<feature type="chain" id="PRO_0000331383" description="Apoptosis-inducing factor homolog A">
    <location>
        <begin position="1"/>
        <end position="408"/>
    </location>
</feature>
<feature type="binding site" evidence="2">
    <location>
        <begin position="34"/>
        <end position="38"/>
    </location>
    <ligand>
        <name>FAD</name>
        <dbReference type="ChEBI" id="CHEBI:57692"/>
    </ligand>
</feature>
<feature type="binding site" evidence="2">
    <location>
        <position position="69"/>
    </location>
    <ligand>
        <name>FAD</name>
        <dbReference type="ChEBI" id="CHEBI:57692"/>
    </ligand>
</feature>
<feature type="binding site" evidence="2">
    <location>
        <position position="314"/>
    </location>
    <ligand>
        <name>FAD</name>
        <dbReference type="ChEBI" id="CHEBI:57692"/>
    </ligand>
</feature>
<accession>Q54NS9</accession>
<protein>
    <recommendedName>
        <fullName>Apoptosis-inducing factor homolog A</fullName>
        <ecNumber>1.-.-.-</ecNumber>
    </recommendedName>
</protein>
<organism>
    <name type="scientific">Dictyostelium discoideum</name>
    <name type="common">Social amoeba</name>
    <dbReference type="NCBI Taxonomy" id="44689"/>
    <lineage>
        <taxon>Eukaryota</taxon>
        <taxon>Amoebozoa</taxon>
        <taxon>Evosea</taxon>
        <taxon>Eumycetozoa</taxon>
        <taxon>Dictyostelia</taxon>
        <taxon>Dictyosteliales</taxon>
        <taxon>Dictyosteliaceae</taxon>
        <taxon>Dictyostelium</taxon>
    </lineage>
</organism>